<evidence type="ECO:0000250" key="1"/>
<evidence type="ECO:0000305" key="2"/>
<name>RL8_TETTS</name>
<accession>P0DJ52</accession>
<reference key="1">
    <citation type="journal article" date="2006" name="PLoS Biol.">
        <title>Macronuclear genome sequence of the ciliate Tetrahymena thermophila, a model eukaryote.</title>
        <authorList>
            <person name="Eisen J.A."/>
            <person name="Coyne R.S."/>
            <person name="Wu M."/>
            <person name="Wu D."/>
            <person name="Thiagarajan M."/>
            <person name="Wortman J.R."/>
            <person name="Badger J.H."/>
            <person name="Ren Q."/>
            <person name="Amedeo P."/>
            <person name="Jones K.M."/>
            <person name="Tallon L.J."/>
            <person name="Delcher A.L."/>
            <person name="Salzberg S.L."/>
            <person name="Silva J.C."/>
            <person name="Haas B.J."/>
            <person name="Majoros W.H."/>
            <person name="Farzad M."/>
            <person name="Carlton J.M."/>
            <person name="Smith R.K. Jr."/>
            <person name="Garg J."/>
            <person name="Pearlman R.E."/>
            <person name="Karrer K.M."/>
            <person name="Sun L."/>
            <person name="Manning G."/>
            <person name="Elde N.C."/>
            <person name="Turkewitz A.P."/>
            <person name="Asai D.J."/>
            <person name="Wilkes D.E."/>
            <person name="Wang Y."/>
            <person name="Cai H."/>
            <person name="Collins K."/>
            <person name="Stewart B.A."/>
            <person name="Lee S.R."/>
            <person name="Wilamowska K."/>
            <person name="Weinberg Z."/>
            <person name="Ruzzo W.L."/>
            <person name="Wloga D."/>
            <person name="Gaertig J."/>
            <person name="Frankel J."/>
            <person name="Tsao C.-C."/>
            <person name="Gorovsky M.A."/>
            <person name="Keeling P.J."/>
            <person name="Waller R.F."/>
            <person name="Patron N.J."/>
            <person name="Cherry J.M."/>
            <person name="Stover N.A."/>
            <person name="Krieger C.J."/>
            <person name="del Toro C."/>
            <person name="Ryder H.F."/>
            <person name="Williamson S.C."/>
            <person name="Barbeau R.A."/>
            <person name="Hamilton E.P."/>
            <person name="Orias E."/>
        </authorList>
    </citation>
    <scope>NUCLEOTIDE SEQUENCE [LARGE SCALE GENOMIC DNA]</scope>
    <source>
        <strain>SB210</strain>
    </source>
</reference>
<reference key="2">
    <citation type="journal article" date="2011" name="Science">
        <title>Crystal structure of the eukaryotic 60S ribosomal subunit in complex with initiation factor 6.</title>
        <authorList>
            <person name="Klinge S."/>
            <person name="Voigts-Hoffmann F."/>
            <person name="Leibundgut M."/>
            <person name="Arpagaus S."/>
            <person name="Ban N."/>
        </authorList>
    </citation>
    <scope>X-RAY CRYSTALLOGRAPHY (3.52 ANGSTROMS) OF 60S RIBOSOME</scope>
</reference>
<comment type="subcellular location">
    <subcellularLocation>
        <location evidence="1">Cytoplasm</location>
    </subcellularLocation>
</comment>
<comment type="similarity">
    <text evidence="2">Belongs to the universal ribosomal protein uL2 family.</text>
</comment>
<keyword id="KW-0002">3D-structure</keyword>
<keyword id="KW-0963">Cytoplasm</keyword>
<keyword id="KW-1185">Reference proteome</keyword>
<keyword id="KW-0687">Ribonucleoprotein</keyword>
<keyword id="KW-0689">Ribosomal protein</keyword>
<keyword id="KW-0694">RNA-binding</keyword>
<keyword id="KW-0699">rRNA-binding</keyword>
<sequence>MGRVIRAQRKGRANGVYKSHKSGRIAPAQYRVYDFAERQGYIRGCIRDIVHEPGRGAPLAEVAFRDPYRYKTNKEHFIAAEGQYSGQYVYCGLKAQIAVGNVLPINRIPEGTVVCNVEEKVGDRGTFSRASGCYATIIGHSEDGDKTRIRLPSGARKTIPGSCRATVGIVAGGGRTDKPILKAGNQFHKYARKRKSWPRVRGVAMNPVDHPHGGGNHQHIGHPATVSKWASAGQKVGLRAARRTGLVRGGQKEKMAMKAAAAGV</sequence>
<gene>
    <name type="primary">RPL8</name>
    <name type="synonym">RPL2</name>
    <name type="ORF">TTHERM_00716240</name>
</gene>
<proteinExistence type="evidence at protein level"/>
<dbReference type="EMBL" id="GG662447">
    <property type="protein sequence ID" value="EAR84318.2"/>
    <property type="molecule type" value="Genomic_DNA"/>
</dbReference>
<dbReference type="RefSeq" id="XP_001031981.2">
    <property type="nucleotide sequence ID" value="XM_001031981.2"/>
</dbReference>
<dbReference type="PDB" id="4V8P">
    <property type="method" value="X-ray"/>
    <property type="resolution" value="3.52 A"/>
    <property type="chains" value="BA/CA/EA/GA=1-264"/>
</dbReference>
<dbReference type="PDBsum" id="4V8P"/>
<dbReference type="SMR" id="P0DJ52"/>
<dbReference type="FunCoup" id="P0DJ52">
    <property type="interactions" value="390"/>
</dbReference>
<dbReference type="IntAct" id="P0DJ52">
    <property type="interactions" value="1"/>
</dbReference>
<dbReference type="STRING" id="312017.P0DJ52"/>
<dbReference type="EnsemblProtists" id="EAR84318">
    <property type="protein sequence ID" value="EAR84318"/>
    <property type="gene ID" value="TTHERM_00716240"/>
</dbReference>
<dbReference type="GeneID" id="7845569"/>
<dbReference type="KEGG" id="tet:TTHERM_00716240"/>
<dbReference type="eggNOG" id="KOG2309">
    <property type="taxonomic scope" value="Eukaryota"/>
</dbReference>
<dbReference type="HOGENOM" id="CLU_036235_0_3_1"/>
<dbReference type="InParanoid" id="P0DJ52"/>
<dbReference type="OMA" id="GGRHPCT"/>
<dbReference type="OrthoDB" id="283117at2759"/>
<dbReference type="Proteomes" id="UP000009168">
    <property type="component" value="Unassembled WGS sequence"/>
</dbReference>
<dbReference type="GO" id="GO:0022625">
    <property type="term" value="C:cytosolic large ribosomal subunit"/>
    <property type="evidence" value="ECO:0007669"/>
    <property type="project" value="TreeGrafter"/>
</dbReference>
<dbReference type="GO" id="GO:0019843">
    <property type="term" value="F:rRNA binding"/>
    <property type="evidence" value="ECO:0007669"/>
    <property type="project" value="UniProtKB-KW"/>
</dbReference>
<dbReference type="GO" id="GO:0003735">
    <property type="term" value="F:structural constituent of ribosome"/>
    <property type="evidence" value="ECO:0007669"/>
    <property type="project" value="InterPro"/>
</dbReference>
<dbReference type="GO" id="GO:0002181">
    <property type="term" value="P:cytoplasmic translation"/>
    <property type="evidence" value="ECO:0007669"/>
    <property type="project" value="TreeGrafter"/>
</dbReference>
<dbReference type="FunFam" id="2.40.50.140:FF:000020">
    <property type="entry name" value="60S ribosomal protein L2"/>
    <property type="match status" value="1"/>
</dbReference>
<dbReference type="FunFam" id="4.10.950.10:FF:000002">
    <property type="entry name" value="60S ribosomal protein L2"/>
    <property type="match status" value="1"/>
</dbReference>
<dbReference type="FunFam" id="2.30.30.30:FF:000006">
    <property type="entry name" value="60S ribosomal protein L8"/>
    <property type="match status" value="1"/>
</dbReference>
<dbReference type="Gene3D" id="2.30.30.30">
    <property type="match status" value="1"/>
</dbReference>
<dbReference type="Gene3D" id="2.40.50.140">
    <property type="entry name" value="Nucleic acid-binding proteins"/>
    <property type="match status" value="1"/>
</dbReference>
<dbReference type="Gene3D" id="4.10.950.10">
    <property type="entry name" value="Ribosomal protein L2, domain 3"/>
    <property type="match status" value="1"/>
</dbReference>
<dbReference type="InterPro" id="IPR012340">
    <property type="entry name" value="NA-bd_OB-fold"/>
</dbReference>
<dbReference type="InterPro" id="IPR014722">
    <property type="entry name" value="Rib_uL2_dom2"/>
</dbReference>
<dbReference type="InterPro" id="IPR002171">
    <property type="entry name" value="Ribosomal_uL2"/>
</dbReference>
<dbReference type="InterPro" id="IPR023672">
    <property type="entry name" value="Ribosomal_uL2_arc_euk"/>
</dbReference>
<dbReference type="InterPro" id="IPR022669">
    <property type="entry name" value="Ribosomal_uL2_C"/>
</dbReference>
<dbReference type="InterPro" id="IPR022671">
    <property type="entry name" value="Ribosomal_uL2_CS"/>
</dbReference>
<dbReference type="InterPro" id="IPR014726">
    <property type="entry name" value="Ribosomal_uL2_dom3"/>
</dbReference>
<dbReference type="InterPro" id="IPR022666">
    <property type="entry name" value="Ribosomal_uL2_RNA-bd_dom"/>
</dbReference>
<dbReference type="InterPro" id="IPR008991">
    <property type="entry name" value="Translation_prot_SH3-like_sf"/>
</dbReference>
<dbReference type="NCBIfam" id="NF007180">
    <property type="entry name" value="PRK09612.1"/>
    <property type="match status" value="1"/>
</dbReference>
<dbReference type="PANTHER" id="PTHR13691:SF16">
    <property type="entry name" value="LARGE RIBOSOMAL SUBUNIT PROTEIN UL2"/>
    <property type="match status" value="1"/>
</dbReference>
<dbReference type="PANTHER" id="PTHR13691">
    <property type="entry name" value="RIBOSOMAL PROTEIN L2"/>
    <property type="match status" value="1"/>
</dbReference>
<dbReference type="Pfam" id="PF00181">
    <property type="entry name" value="Ribosomal_L2"/>
    <property type="match status" value="1"/>
</dbReference>
<dbReference type="Pfam" id="PF03947">
    <property type="entry name" value="Ribosomal_L2_C"/>
    <property type="match status" value="1"/>
</dbReference>
<dbReference type="PIRSF" id="PIRSF002158">
    <property type="entry name" value="Ribosomal_L2"/>
    <property type="match status" value="1"/>
</dbReference>
<dbReference type="SMART" id="SM01383">
    <property type="entry name" value="Ribosomal_L2"/>
    <property type="match status" value="1"/>
</dbReference>
<dbReference type="SMART" id="SM01382">
    <property type="entry name" value="Ribosomal_L2_C"/>
    <property type="match status" value="1"/>
</dbReference>
<dbReference type="SUPFAM" id="SSF50249">
    <property type="entry name" value="Nucleic acid-binding proteins"/>
    <property type="match status" value="1"/>
</dbReference>
<dbReference type="SUPFAM" id="SSF50104">
    <property type="entry name" value="Translation proteins SH3-like domain"/>
    <property type="match status" value="1"/>
</dbReference>
<dbReference type="PROSITE" id="PS00467">
    <property type="entry name" value="RIBOSOMAL_L2"/>
    <property type="match status" value="1"/>
</dbReference>
<protein>
    <recommendedName>
        <fullName evidence="2">Large ribosomal subunit protein uL2</fullName>
    </recommendedName>
    <alternativeName>
        <fullName>60S ribosomal protein L8</fullName>
    </alternativeName>
</protein>
<feature type="chain" id="PRO_0000413488" description="Large ribosomal subunit protein uL2">
    <location>
        <begin position="1"/>
        <end position="264"/>
    </location>
</feature>
<organism>
    <name type="scientific">Tetrahymena thermophila (strain SB210)</name>
    <dbReference type="NCBI Taxonomy" id="312017"/>
    <lineage>
        <taxon>Eukaryota</taxon>
        <taxon>Sar</taxon>
        <taxon>Alveolata</taxon>
        <taxon>Ciliophora</taxon>
        <taxon>Intramacronucleata</taxon>
        <taxon>Oligohymenophorea</taxon>
        <taxon>Hymenostomatida</taxon>
        <taxon>Tetrahymenina</taxon>
        <taxon>Tetrahymenidae</taxon>
        <taxon>Tetrahymena</taxon>
    </lineage>
</organism>